<accession>Q6T412</accession>
<protein>
    <recommendedName>
        <fullName>Pre-mRNA-splicing factor CWC2</fullName>
    </recommendedName>
</protein>
<feature type="chain" id="PRO_0000081547" description="Pre-mRNA-splicing factor CWC2">
    <location>
        <begin position="1"/>
        <end position="421"/>
    </location>
</feature>
<feature type="domain" description="RRM" evidence="2">
    <location>
        <begin position="189"/>
        <end position="263"/>
    </location>
</feature>
<feature type="zinc finger region" description="C3H1-type" evidence="3">
    <location>
        <begin position="126"/>
        <end position="153"/>
    </location>
</feature>
<feature type="region of interest" description="Disordered" evidence="4">
    <location>
        <begin position="1"/>
        <end position="32"/>
    </location>
</feature>
<feature type="region of interest" description="Disordered" evidence="4">
    <location>
        <begin position="59"/>
        <end position="80"/>
    </location>
</feature>
<name>CWC2_LEPMC</name>
<reference key="1">
    <citation type="journal article" date="2004" name="Curr. Genet.">
        <title>Negative selection using thymidine kinase increases the efficiency of recovery of transformants with targeted genes in the filamentous fungus Leptosphaeria maculans.</title>
        <authorList>
            <person name="Gardiner D.M."/>
            <person name="Howlett B.J."/>
        </authorList>
    </citation>
    <scope>NUCLEOTIDE SEQUENCE [GENOMIC DNA]</scope>
</reference>
<gene>
    <name type="primary">CWC2</name>
</gene>
<keyword id="KW-0131">Cell cycle</keyword>
<keyword id="KW-0479">Metal-binding</keyword>
<keyword id="KW-0507">mRNA processing</keyword>
<keyword id="KW-0508">mRNA splicing</keyword>
<keyword id="KW-0539">Nucleus</keyword>
<keyword id="KW-0694">RNA-binding</keyword>
<keyword id="KW-0747">Spliceosome</keyword>
<keyword id="KW-0862">Zinc</keyword>
<keyword id="KW-0863">Zinc-finger</keyword>
<dbReference type="EMBL" id="AY437641">
    <property type="protein sequence ID" value="AAR99468.1"/>
    <property type="molecule type" value="Genomic_DNA"/>
</dbReference>
<dbReference type="GO" id="GO:0000974">
    <property type="term" value="C:Prp19 complex"/>
    <property type="evidence" value="ECO:0000250"/>
    <property type="project" value="UniProtKB"/>
</dbReference>
<dbReference type="GO" id="GO:0071006">
    <property type="term" value="C:U2-type catalytic step 1 spliceosome"/>
    <property type="evidence" value="ECO:0007669"/>
    <property type="project" value="TreeGrafter"/>
</dbReference>
<dbReference type="GO" id="GO:0071007">
    <property type="term" value="C:U2-type catalytic step 2 spliceosome"/>
    <property type="evidence" value="ECO:0007669"/>
    <property type="project" value="TreeGrafter"/>
</dbReference>
<dbReference type="GO" id="GO:0036002">
    <property type="term" value="F:pre-mRNA binding"/>
    <property type="evidence" value="ECO:0000250"/>
    <property type="project" value="UniProtKB"/>
</dbReference>
<dbReference type="GO" id="GO:0017070">
    <property type="term" value="F:U6 snRNA binding"/>
    <property type="evidence" value="ECO:0000250"/>
    <property type="project" value="UniProtKB"/>
</dbReference>
<dbReference type="GO" id="GO:0008270">
    <property type="term" value="F:zinc ion binding"/>
    <property type="evidence" value="ECO:0007669"/>
    <property type="project" value="UniProtKB-KW"/>
</dbReference>
<dbReference type="GO" id="GO:0045292">
    <property type="term" value="P:mRNA cis splicing, via spliceosome"/>
    <property type="evidence" value="ECO:0000250"/>
    <property type="project" value="UniProtKB"/>
</dbReference>
<dbReference type="GO" id="GO:0045787">
    <property type="term" value="P:positive regulation of cell cycle"/>
    <property type="evidence" value="ECO:0000250"/>
    <property type="project" value="UniProtKB"/>
</dbReference>
<dbReference type="GO" id="GO:0033120">
    <property type="term" value="P:positive regulation of RNA splicing"/>
    <property type="evidence" value="ECO:0000250"/>
    <property type="project" value="UniProtKB"/>
</dbReference>
<dbReference type="GO" id="GO:0000387">
    <property type="term" value="P:spliceosomal snRNP assembly"/>
    <property type="evidence" value="ECO:0000250"/>
    <property type="project" value="UniProtKB"/>
</dbReference>
<dbReference type="CDD" id="cd12360">
    <property type="entry name" value="RRM_cwf2"/>
    <property type="match status" value="1"/>
</dbReference>
<dbReference type="FunFam" id="3.30.70.330:FF:000249">
    <property type="entry name" value="Pre-mRNA-splicing factor CWC2, variant"/>
    <property type="match status" value="1"/>
</dbReference>
<dbReference type="Gene3D" id="3.30.70.330">
    <property type="match status" value="1"/>
</dbReference>
<dbReference type="InterPro" id="IPR039171">
    <property type="entry name" value="Cwc2/Slt11"/>
</dbReference>
<dbReference type="InterPro" id="IPR034181">
    <property type="entry name" value="Cwc2_RRM"/>
</dbReference>
<dbReference type="InterPro" id="IPR012677">
    <property type="entry name" value="Nucleotide-bd_a/b_plait_sf"/>
</dbReference>
<dbReference type="InterPro" id="IPR035979">
    <property type="entry name" value="RBD_domain_sf"/>
</dbReference>
<dbReference type="InterPro" id="IPR000504">
    <property type="entry name" value="RRM_dom"/>
</dbReference>
<dbReference type="InterPro" id="IPR032297">
    <property type="entry name" value="Torus"/>
</dbReference>
<dbReference type="InterPro" id="IPR000571">
    <property type="entry name" value="Znf_CCCH"/>
</dbReference>
<dbReference type="InterPro" id="IPR036855">
    <property type="entry name" value="Znf_CCCH_sf"/>
</dbReference>
<dbReference type="PANTHER" id="PTHR14089:SF2">
    <property type="entry name" value="PRE-MRNA-SPLICING FACTOR CWC2"/>
    <property type="match status" value="1"/>
</dbReference>
<dbReference type="PANTHER" id="PTHR14089">
    <property type="entry name" value="PRE-MRNA-SPLICING FACTOR RBM22"/>
    <property type="match status" value="1"/>
</dbReference>
<dbReference type="Pfam" id="PF00076">
    <property type="entry name" value="RRM_1"/>
    <property type="match status" value="1"/>
</dbReference>
<dbReference type="Pfam" id="PF16131">
    <property type="entry name" value="Torus"/>
    <property type="match status" value="1"/>
</dbReference>
<dbReference type="SMART" id="SM00360">
    <property type="entry name" value="RRM"/>
    <property type="match status" value="1"/>
</dbReference>
<dbReference type="SUPFAM" id="SSF90229">
    <property type="entry name" value="CCCH zinc finger"/>
    <property type="match status" value="1"/>
</dbReference>
<dbReference type="SUPFAM" id="SSF54928">
    <property type="entry name" value="RNA-binding domain, RBD"/>
    <property type="match status" value="1"/>
</dbReference>
<dbReference type="PROSITE" id="PS50102">
    <property type="entry name" value="RRM"/>
    <property type="match status" value="1"/>
</dbReference>
<dbReference type="PROSITE" id="PS50103">
    <property type="entry name" value="ZF_C3H1"/>
    <property type="match status" value="1"/>
</dbReference>
<organism>
    <name type="scientific">Leptosphaeria maculans</name>
    <name type="common">Blackleg fungus</name>
    <name type="synonym">Phoma lingam</name>
    <dbReference type="NCBI Taxonomy" id="5022"/>
    <lineage>
        <taxon>Eukaryota</taxon>
        <taxon>Fungi</taxon>
        <taxon>Dikarya</taxon>
        <taxon>Ascomycota</taxon>
        <taxon>Pezizomycotina</taxon>
        <taxon>Dothideomycetes</taxon>
        <taxon>Pleosporomycetidae</taxon>
        <taxon>Pleosporales</taxon>
        <taxon>Pleosporineae</taxon>
        <taxon>Leptosphaeriaceae</taxon>
        <taxon>Plenodomus</taxon>
        <taxon>Plenodomus lingam/Leptosphaeria maculans species complex</taxon>
    </lineage>
</organism>
<proteinExistence type="inferred from homology"/>
<evidence type="ECO:0000250" key="1"/>
<evidence type="ECO:0000255" key="2">
    <source>
        <dbReference type="PROSITE-ProRule" id="PRU00176"/>
    </source>
</evidence>
<evidence type="ECO:0000255" key="3">
    <source>
        <dbReference type="PROSITE-ProRule" id="PRU00723"/>
    </source>
</evidence>
<evidence type="ECO:0000256" key="4">
    <source>
        <dbReference type="SAM" id="MobiDB-lite"/>
    </source>
</evidence>
<evidence type="ECO:0000305" key="5"/>
<sequence>MTEVQPPPAQSTVATADTPSLAPDTTLETSTSTELAPITTEQTIITTNAEGKKVKKIIRRKRRPARPQVDPATFKTDTPAPTGTSFNIWYNKWSGGDREDKYLSQTAAQGRCNVARDSGYTKADKTPGSYFCLFFARGICPKGVDCEYLHRLPTVTDIFPSNIDCFGRDKHSDYRDDMGGVGSFQRQNRTLYIGRIHVTDDIEEIVARHFQEWGQIERTRVLTARGVAFVTYMNEANSQFAKEAMAHQSLDHNEILNVRWATVDPNPQAAKREAHRIEEQAAEAIRKALPAAYVAELEGRDPEAKKRRKIEGSFGLQGYEAPDDVWYAKEKAEWEAAKEIEAAGGAAXPRQMIESGEDAHAHEADCAAMQVAPSGQHSQGNGIFSTSTLAALRGYTAAPAKPKVAPVAGPLVGYGSDDDSD</sequence>
<comment type="function">
    <text evidence="1">Involved in the first step of pre-mRNA splicing. Required for cell growth and cell cycle control. Plays a role in the levels of the U1, U4, U5 and U6 snRNAs and the maintenance of the U4/U6 snRNA complex. May provide the link between the 'nineteen complex' NTC spliceosome protein complex and the spliceosome through the U6 snRNA. Associates predominantly with U6 snRNAs in assembled active spliceosomes. Binds directly to the internal stem-loop (ISL) domain of the U6 snRNA and to the pre-mRNA intron near the 5' splice site during the activation and catalytic phases of the spliceosome cycle (By similarity).</text>
</comment>
<comment type="subunit">
    <text evidence="1">Associated with the spliceosome.</text>
</comment>
<comment type="subcellular location">
    <subcellularLocation>
        <location evidence="1">Nucleus</location>
    </subcellularLocation>
</comment>
<comment type="domain">
    <text evidence="1">The C-terminal RRM domain and the zinc finger motif are necessary for RNA-binding.</text>
</comment>
<comment type="similarity">
    <text evidence="5">Belongs to the RRM CWC2 family.</text>
</comment>